<feature type="chain" id="PRO_0000363694" description="cGMP-specific 3',5'-cyclic phosphodiesterase">
    <location>
        <begin position="1"/>
        <end position="1107"/>
    </location>
</feature>
<feature type="propeptide" id="PRO_0000363695" description="Removed in mature form" evidence="1">
    <location>
        <begin position="1108"/>
        <end position="1110"/>
    </location>
</feature>
<feature type="domain" description="GAF 1">
    <location>
        <begin position="233"/>
        <end position="385"/>
    </location>
</feature>
<feature type="domain" description="GAF 2">
    <location>
        <begin position="417"/>
        <end position="601"/>
    </location>
</feature>
<feature type="domain" description="PDEase" evidence="4">
    <location>
        <begin position="631"/>
        <end position="954"/>
    </location>
</feature>
<feature type="region of interest" description="Disordered" evidence="5">
    <location>
        <begin position="1"/>
        <end position="55"/>
    </location>
</feature>
<feature type="region of interest" description="Disordered" evidence="5">
    <location>
        <begin position="67"/>
        <end position="128"/>
    </location>
</feature>
<feature type="region of interest" description="Disordered" evidence="5">
    <location>
        <begin position="184"/>
        <end position="203"/>
    </location>
</feature>
<feature type="region of interest" description="Disordered" evidence="5">
    <location>
        <begin position="997"/>
        <end position="1028"/>
    </location>
</feature>
<feature type="region of interest" description="Disordered" evidence="5">
    <location>
        <begin position="1040"/>
        <end position="1110"/>
    </location>
</feature>
<feature type="compositionally biased region" description="Low complexity" evidence="5">
    <location>
        <begin position="1"/>
        <end position="25"/>
    </location>
</feature>
<feature type="compositionally biased region" description="Low complexity" evidence="5">
    <location>
        <begin position="35"/>
        <end position="55"/>
    </location>
</feature>
<feature type="compositionally biased region" description="Pro residues" evidence="5">
    <location>
        <begin position="88"/>
        <end position="103"/>
    </location>
</feature>
<feature type="compositionally biased region" description="Low complexity" evidence="5">
    <location>
        <begin position="192"/>
        <end position="203"/>
    </location>
</feature>
<feature type="compositionally biased region" description="Basic and acidic residues" evidence="5">
    <location>
        <begin position="1006"/>
        <end position="1015"/>
    </location>
</feature>
<feature type="compositionally biased region" description="Basic and acidic residues" evidence="5">
    <location>
        <begin position="1056"/>
        <end position="1068"/>
    </location>
</feature>
<feature type="compositionally biased region" description="Low complexity" evidence="5">
    <location>
        <begin position="1082"/>
        <end position="1097"/>
    </location>
</feature>
<feature type="compositionally biased region" description="Basic residues" evidence="5">
    <location>
        <begin position="1100"/>
        <end position="1110"/>
    </location>
</feature>
<feature type="active site" description="Proton donor" evidence="1">
    <location>
        <position position="707"/>
    </location>
</feature>
<feature type="binding site" evidence="1">
    <location>
        <position position="711"/>
    </location>
    <ligand>
        <name>a divalent metal cation</name>
        <dbReference type="ChEBI" id="CHEBI:60240"/>
        <label>1</label>
    </ligand>
</feature>
<feature type="binding site" evidence="1">
    <location>
        <position position="747"/>
    </location>
    <ligand>
        <name>a divalent metal cation</name>
        <dbReference type="ChEBI" id="CHEBI:60240"/>
        <label>1</label>
    </ligand>
</feature>
<feature type="binding site" evidence="1">
    <location>
        <position position="748"/>
    </location>
    <ligand>
        <name>a divalent metal cation</name>
        <dbReference type="ChEBI" id="CHEBI:60240"/>
        <label>1</label>
    </ligand>
</feature>
<feature type="binding site" evidence="1">
    <location>
        <position position="748"/>
    </location>
    <ligand>
        <name>a divalent metal cation</name>
        <dbReference type="ChEBI" id="CHEBI:60240"/>
        <label>2</label>
    </ligand>
</feature>
<feature type="binding site" evidence="1">
    <location>
        <position position="858"/>
    </location>
    <ligand>
        <name>a divalent metal cation</name>
        <dbReference type="ChEBI" id="CHEBI:60240"/>
        <label>1</label>
    </ligand>
</feature>
<feature type="modified residue" description="Cysteine methyl ester" evidence="1">
    <location>
        <position position="1107"/>
    </location>
</feature>
<feature type="lipid moiety-binding region" description="S-farnesyl cysteine" evidence="1">
    <location>
        <position position="1107"/>
    </location>
</feature>
<sequence>MTDVSAAAGGATAPAETAATSSSASKPLTNGANKTSTAMAAPTATPTTAATASGAAEAGAITSVAGISNQVKLEHHHHRQSNNNRPVAPYPPVPAAKPKPTPTPESKFKSTSREPGMSSSSSSAQQDVDEVARLFEEKPEAFEKWLTERAPPEALSRLQEFIESRKPLKRPSVTSDLFQQWMSASPTVQQKSPRSLSNSSASSTLPECRRHLMDLDEGELFMELIRDVANELDIDVLCHKILVNVGLLTHADRGSLFLAKGTPHNKYLVAKLFDVTQKTALKDAVTRASAEEIIIPFGIGIAGMVAQTKQMINIKEAYKDARFNCEIDLKTGYKTNAILCMPICNYEGDIIGVAQIINKTNGCMEFDEHDVEIFRRYLTFCGIGIQNAQLFEMSVQEYRRNQILLNLARSIFEEQNNLECLVTKIMTEARELLNCERCSVFLVDLDCCEASHLEKIIEKPNQPEQRPTRAIMPGDSFDEKKMRNRFTVLFELGGEYQAASVSRPSKTELSTSTLAQIAQFVATTGQTVNICDVHEWVRDHNQIRAESEIDSTQAILCMPIVNAQKVVIGVAQLINKANGVPFTESDASIFEAFAIFCGLGIHNTQMYENACKLMAKQKVALECLSYHATASQDQTEKLTQDAIAEAESYNLYSFTFTDFELVDDDTCRAVLRMFLQCNLVSQFQIPYDVLCRWVLSVRKNYRPVKYHNWRHALNVAQTMFAMLKTGKMERFMTDLEILGLLVACLCHDLDHRGTNNAFQTKTESPLAILYTTSTMEHHHFDQCVMILNSEGNNIFQALSPEDYRSVMKTVESAILSTDLAMYFKKRNAFLELVENGEFDWQGEEKKDLLCGMMMTACDVSAIAKPWEVQHKVAKLVADEFFDQGDLEKLQLNTQPVAMMDRERKDELPKMQVGFIDVICLPLYRVLCDTFPWITPLYEGTLENRRNWQDLAEKVEMGLTWIDHDTIDKPVEEFAGCADEEIKDIEFTVTTLNCNQQAQHGAGAGGDDSHTPEHQRSGSRLSMKKTGALGKAVRSKLSKTLYNSMDGSKPKTSLKLLESHVSEDMDDKSPTSPSQPHAGGSVGRMSASSSTSSAGTVVDKSKKRSKLCSLL</sequence>
<evidence type="ECO:0000250" key="1"/>
<evidence type="ECO:0000250" key="2">
    <source>
        <dbReference type="UniProtKB" id="Q9VFI9"/>
    </source>
</evidence>
<evidence type="ECO:0000255" key="3"/>
<evidence type="ECO:0000255" key="4">
    <source>
        <dbReference type="PROSITE-ProRule" id="PRU01192"/>
    </source>
</evidence>
<evidence type="ECO:0000256" key="5">
    <source>
        <dbReference type="SAM" id="MobiDB-lite"/>
    </source>
</evidence>
<gene>
    <name evidence="2" type="primary">Pde6</name>
    <name type="ORF">GA20950</name>
</gene>
<reference key="1">
    <citation type="journal article" date="2005" name="Genome Res.">
        <title>Comparative genome sequencing of Drosophila pseudoobscura: chromosomal, gene, and cis-element evolution.</title>
        <authorList>
            <person name="Richards S."/>
            <person name="Liu Y."/>
            <person name="Bettencourt B.R."/>
            <person name="Hradecky P."/>
            <person name="Letovsky S."/>
            <person name="Nielsen R."/>
            <person name="Thornton K."/>
            <person name="Hubisz M.J."/>
            <person name="Chen R."/>
            <person name="Meisel R.P."/>
            <person name="Couronne O."/>
            <person name="Hua S."/>
            <person name="Smith M.A."/>
            <person name="Zhang P."/>
            <person name="Liu J."/>
            <person name="Bussemaker H.J."/>
            <person name="van Batenburg M.F."/>
            <person name="Howells S.L."/>
            <person name="Scherer S.E."/>
            <person name="Sodergren E."/>
            <person name="Matthews B.B."/>
            <person name="Crosby M.A."/>
            <person name="Schroeder A.J."/>
            <person name="Ortiz-Barrientos D."/>
            <person name="Rives C.M."/>
            <person name="Metzker M.L."/>
            <person name="Muzny D.M."/>
            <person name="Scott G."/>
            <person name="Steffen D."/>
            <person name="Wheeler D.A."/>
            <person name="Worley K.C."/>
            <person name="Havlak P."/>
            <person name="Durbin K.J."/>
            <person name="Egan A."/>
            <person name="Gill R."/>
            <person name="Hume J."/>
            <person name="Morgan M.B."/>
            <person name="Miner G."/>
            <person name="Hamilton C."/>
            <person name="Huang Y."/>
            <person name="Waldron L."/>
            <person name="Verduzco D."/>
            <person name="Clerc-Blankenburg K.P."/>
            <person name="Dubchak I."/>
            <person name="Noor M.A.F."/>
            <person name="Anderson W."/>
            <person name="White K.P."/>
            <person name="Clark A.G."/>
            <person name="Schaeffer S.W."/>
            <person name="Gelbart W.M."/>
            <person name="Weinstock G.M."/>
            <person name="Gibbs R.A."/>
        </authorList>
    </citation>
    <scope>NUCLEOTIDE SEQUENCE [LARGE SCALE GENOMIC DNA]</scope>
    <source>
        <strain>MV2-25 / Tucson 14011-0121.94</strain>
    </source>
</reference>
<protein>
    <recommendedName>
        <fullName evidence="2">cGMP-specific 3',5'-cyclic phosphodiesterase</fullName>
        <ecNumber>3.1.4.35</ecNumber>
    </recommendedName>
</protein>
<comment type="function">
    <text evidence="2">Has a role regulating cGMP transport in Malpighian tubule principal cells.</text>
</comment>
<comment type="catalytic activity">
    <reaction evidence="2">
        <text>3',5'-cyclic GMP + H2O = GMP + H(+)</text>
        <dbReference type="Rhea" id="RHEA:16957"/>
        <dbReference type="ChEBI" id="CHEBI:15377"/>
        <dbReference type="ChEBI" id="CHEBI:15378"/>
        <dbReference type="ChEBI" id="CHEBI:57746"/>
        <dbReference type="ChEBI" id="CHEBI:58115"/>
        <dbReference type="EC" id="3.1.4.35"/>
    </reaction>
</comment>
<comment type="cofactor">
    <cofactor evidence="1">
        <name>a divalent metal cation</name>
        <dbReference type="ChEBI" id="CHEBI:60240"/>
    </cofactor>
    <text evidence="1">Binds 2 divalent metal cations per subunit. Site 1 may preferentially bind zinc ions, while site 2 has a preference for magnesium and/or manganese ions.</text>
</comment>
<comment type="subunit">
    <text evidence="2">Interacts with PrBP.</text>
</comment>
<comment type="subcellular location">
    <subcellularLocation>
        <location evidence="2">Cell membrane</location>
        <topology evidence="2">Lipid-anchor</topology>
        <orientation evidence="2">Cytoplasmic side</orientation>
    </subcellularLocation>
</comment>
<comment type="similarity">
    <text evidence="3">Belongs to the cyclic nucleotide phosphodiesterase family.</text>
</comment>
<keyword id="KW-1003">Cell membrane</keyword>
<keyword id="KW-0140">cGMP</keyword>
<keyword id="KW-0378">Hydrolase</keyword>
<keyword id="KW-0449">Lipoprotein</keyword>
<keyword id="KW-0472">Membrane</keyword>
<keyword id="KW-0479">Metal-binding</keyword>
<keyword id="KW-0488">Methylation</keyword>
<keyword id="KW-0636">Prenylation</keyword>
<keyword id="KW-1185">Reference proteome</keyword>
<keyword id="KW-0677">Repeat</keyword>
<organism>
    <name type="scientific">Drosophila pseudoobscura pseudoobscura</name>
    <name type="common">Fruit fly</name>
    <dbReference type="NCBI Taxonomy" id="46245"/>
    <lineage>
        <taxon>Eukaryota</taxon>
        <taxon>Metazoa</taxon>
        <taxon>Ecdysozoa</taxon>
        <taxon>Arthropoda</taxon>
        <taxon>Hexapoda</taxon>
        <taxon>Insecta</taxon>
        <taxon>Pterygota</taxon>
        <taxon>Neoptera</taxon>
        <taxon>Endopterygota</taxon>
        <taxon>Diptera</taxon>
        <taxon>Brachycera</taxon>
        <taxon>Muscomorpha</taxon>
        <taxon>Ephydroidea</taxon>
        <taxon>Drosophilidae</taxon>
        <taxon>Drosophila</taxon>
        <taxon>Sophophora</taxon>
    </lineage>
</organism>
<dbReference type="EC" id="3.1.4.35"/>
<dbReference type="EMBL" id="CM000070">
    <property type="protein sequence ID" value="EAL27911.3"/>
    <property type="molecule type" value="Genomic_DNA"/>
</dbReference>
<dbReference type="SMR" id="Q298P4"/>
<dbReference type="FunCoup" id="Q298P4">
    <property type="interactions" value="217"/>
</dbReference>
<dbReference type="STRING" id="46245.Q298P4"/>
<dbReference type="eggNOG" id="KOG3689">
    <property type="taxonomic scope" value="Eukaryota"/>
</dbReference>
<dbReference type="HOGENOM" id="CLU_006980_0_2_1"/>
<dbReference type="InParanoid" id="Q298P4"/>
<dbReference type="OMA" id="FHIPYEV"/>
<dbReference type="ChiTaRS" id="Pde6">
    <property type="organism name" value="fly"/>
</dbReference>
<dbReference type="Proteomes" id="UP000001819">
    <property type="component" value="Unplaced"/>
</dbReference>
<dbReference type="GO" id="GO:0016020">
    <property type="term" value="C:membrane"/>
    <property type="evidence" value="ECO:0000250"/>
    <property type="project" value="UniProtKB"/>
</dbReference>
<dbReference type="GO" id="GO:0005886">
    <property type="term" value="C:plasma membrane"/>
    <property type="evidence" value="ECO:0007669"/>
    <property type="project" value="UniProtKB-SubCell"/>
</dbReference>
<dbReference type="GO" id="GO:0047555">
    <property type="term" value="F:3',5'-cyclic-GMP phosphodiesterase activity"/>
    <property type="evidence" value="ECO:0000250"/>
    <property type="project" value="UniProtKB"/>
</dbReference>
<dbReference type="GO" id="GO:0046872">
    <property type="term" value="F:metal ion binding"/>
    <property type="evidence" value="ECO:0007669"/>
    <property type="project" value="UniProtKB-KW"/>
</dbReference>
<dbReference type="GO" id="GO:0046068">
    <property type="term" value="P:cGMP metabolic process"/>
    <property type="evidence" value="ECO:0000250"/>
    <property type="project" value="UniProtKB"/>
</dbReference>
<dbReference type="GO" id="GO:0007165">
    <property type="term" value="P:signal transduction"/>
    <property type="evidence" value="ECO:0007669"/>
    <property type="project" value="InterPro"/>
</dbReference>
<dbReference type="CDD" id="cd00077">
    <property type="entry name" value="HDc"/>
    <property type="match status" value="1"/>
</dbReference>
<dbReference type="FunFam" id="1.10.1300.10:FF:000003">
    <property type="entry name" value="Phosphodiesterase"/>
    <property type="match status" value="1"/>
</dbReference>
<dbReference type="FunFam" id="3.30.450.40:FF:000031">
    <property type="entry name" value="Phosphodiesterase"/>
    <property type="match status" value="1"/>
</dbReference>
<dbReference type="Gene3D" id="3.30.450.40">
    <property type="match status" value="2"/>
</dbReference>
<dbReference type="Gene3D" id="1.10.1300.10">
    <property type="entry name" value="3'5'-cyclic nucleotide phosphodiesterase, catalytic domain"/>
    <property type="match status" value="1"/>
</dbReference>
<dbReference type="InterPro" id="IPR003018">
    <property type="entry name" value="GAF"/>
</dbReference>
<dbReference type="InterPro" id="IPR029016">
    <property type="entry name" value="GAF-like_dom_sf"/>
</dbReference>
<dbReference type="InterPro" id="IPR003607">
    <property type="entry name" value="HD/PDEase_dom"/>
</dbReference>
<dbReference type="InterPro" id="IPR023088">
    <property type="entry name" value="PDEase"/>
</dbReference>
<dbReference type="InterPro" id="IPR002073">
    <property type="entry name" value="PDEase_catalytic_dom"/>
</dbReference>
<dbReference type="InterPro" id="IPR036971">
    <property type="entry name" value="PDEase_catalytic_dom_sf"/>
</dbReference>
<dbReference type="InterPro" id="IPR023174">
    <property type="entry name" value="PDEase_CS"/>
</dbReference>
<dbReference type="PANTHER" id="PTHR11347">
    <property type="entry name" value="CYCLIC NUCLEOTIDE PHOSPHODIESTERASE"/>
    <property type="match status" value="1"/>
</dbReference>
<dbReference type="Pfam" id="PF01590">
    <property type="entry name" value="GAF"/>
    <property type="match status" value="2"/>
</dbReference>
<dbReference type="Pfam" id="PF00233">
    <property type="entry name" value="PDEase_I"/>
    <property type="match status" value="1"/>
</dbReference>
<dbReference type="PRINTS" id="PR00387">
    <property type="entry name" value="PDIESTERASE1"/>
</dbReference>
<dbReference type="SMART" id="SM00065">
    <property type="entry name" value="GAF"/>
    <property type="match status" value="2"/>
</dbReference>
<dbReference type="SMART" id="SM00471">
    <property type="entry name" value="HDc"/>
    <property type="match status" value="1"/>
</dbReference>
<dbReference type="SUPFAM" id="SSF55781">
    <property type="entry name" value="GAF domain-like"/>
    <property type="match status" value="2"/>
</dbReference>
<dbReference type="SUPFAM" id="SSF109604">
    <property type="entry name" value="HD-domain/PDEase-like"/>
    <property type="match status" value="1"/>
</dbReference>
<dbReference type="PROSITE" id="PS00126">
    <property type="entry name" value="PDEASE_I_1"/>
    <property type="match status" value="1"/>
</dbReference>
<dbReference type="PROSITE" id="PS51845">
    <property type="entry name" value="PDEASE_I_2"/>
    <property type="match status" value="1"/>
</dbReference>
<name>PDE6_DROPS</name>
<accession>Q298P4</accession>
<proteinExistence type="inferred from homology"/>